<name>XYND_TALFU</name>
<reference key="1">
    <citation type="journal article" date="2005" name="J. Sci. Food Agric.">
        <title>The substrate specificity and susceptibility to wheat inhibitor proteins of Penicillium funiculosum xylanases from a commercial enzyme preparation.</title>
        <authorList>
            <person name="Furniss C.S.M."/>
            <person name="Williamson G."/>
            <person name="Kroon P.A."/>
        </authorList>
        <dbReference type="AGRICOLA" id="IND43674834"/>
    </citation>
    <scope>NUCLEOTIDE SEQUENCE [GENOMIC DNA]</scope>
    <scope>PROTEIN SEQUENCE OF 186-199 AND 217-235</scope>
    <scope>CATALYTIC ACTIVITY</scope>
    <scope>BIOPHYSICOCHEMICAL PROPERTIES</scope>
    <scope>ACTIVITY REGULATION</scope>
    <source>
        <strain>IMI 134756</strain>
    </source>
</reference>
<reference key="2">
    <citation type="journal article" date="2011" name="Microb. Cell Fact.">
        <title>GH10 xylanase D from Penicillium funiculosum: biochemical studies and xylooligosaccharide production.</title>
        <authorList>
            <person name="Lafond M."/>
            <person name="Tauzin A."/>
            <person name="Desseaux V."/>
            <person name="Bonnin E."/>
            <person name="Ajandouz E.L.-H."/>
            <person name="Giardina T."/>
        </authorList>
    </citation>
    <scope>FUNCTION</scope>
    <scope>CATALYTIC ACTIVITY</scope>
    <scope>BIOPHYSICOCHEMICAL PROPERTIES</scope>
</reference>
<comment type="function">
    <text evidence="7">Endo-1,4-beta-xylanase involved in the hydrolysis of xylan, a major structural heterogeneous polysaccharide found in plant biomass representing the second most abundant polysaccharide in the biosphere, after cellulose. Shows an endo-mode of action on xylan forming mainly xylobiose and short-chain xylooligosaccharides (XOS).</text>
</comment>
<comment type="catalytic activity">
    <reaction evidence="7 8">
        <text>Endohydrolysis of (1-&gt;4)-beta-D-xylosidic linkages in xylans.</text>
        <dbReference type="EC" id="3.2.1.8"/>
    </reaction>
</comment>
<comment type="activity regulation">
    <text evidence="8">Inhibited by wheat xylanase inhibiting protein I (XIP-I).</text>
</comment>
<comment type="biophysicochemical properties">
    <kinetics>
        <KM evidence="7 8">2 mg/ml for birchwood xylan</KM>
        <KM evidence="7 8">11 mg/ml for insoluble fractions of wheat arabinoxylans</KM>
        <Vmax evidence="7 8">130.0 umol/min/mg enzyme toward birchwood xylan</Vmax>
        <Vmax evidence="7 8">535.0 umol/min/mg enzyme toward insoluble fractions of wheat arabinoxylans</Vmax>
    </kinetics>
    <phDependence>
        <text evidence="7 8">Optimum pH is 4.2-5.2 for birchwood xylan and 4.0 for CM cellulose.</text>
    </phDependence>
</comment>
<comment type="pathway">
    <text>Glycan degradation; xylan degradation.</text>
</comment>
<comment type="subcellular location">
    <subcellularLocation>
        <location>Secreted</location>
    </subcellularLocation>
</comment>
<comment type="similarity">
    <text evidence="9">Belongs to the glycosyl hydrolase 10 (cellulase F) family.</text>
</comment>
<accession>Q5ZNB1</accession>
<evidence type="ECO:0000250" key="1"/>
<evidence type="ECO:0000255" key="2"/>
<evidence type="ECO:0000255" key="3">
    <source>
        <dbReference type="PROSITE-ProRule" id="PRU00597"/>
    </source>
</evidence>
<evidence type="ECO:0000255" key="4">
    <source>
        <dbReference type="PROSITE-ProRule" id="PRU01096"/>
    </source>
</evidence>
<evidence type="ECO:0000255" key="5">
    <source>
        <dbReference type="PROSITE-ProRule" id="PRU10061"/>
    </source>
</evidence>
<evidence type="ECO:0000256" key="6">
    <source>
        <dbReference type="SAM" id="MobiDB-lite"/>
    </source>
</evidence>
<evidence type="ECO:0000269" key="7">
    <source>
    </source>
</evidence>
<evidence type="ECO:0000269" key="8">
    <source ref="1"/>
</evidence>
<evidence type="ECO:0000305" key="9"/>
<gene>
    <name type="primary">xynD</name>
</gene>
<dbReference type="EC" id="3.2.1.8"/>
<dbReference type="EMBL" id="AJ634957">
    <property type="protein sequence ID" value="CAG25554.1"/>
    <property type="molecule type" value="Genomic_DNA"/>
</dbReference>
<dbReference type="SMR" id="Q5ZNB1"/>
<dbReference type="CAZy" id="CBM1">
    <property type="family name" value="Carbohydrate-Binding Module Family 1"/>
</dbReference>
<dbReference type="CAZy" id="GH10">
    <property type="family name" value="Glycoside Hydrolase Family 10"/>
</dbReference>
<dbReference type="GlyCosmos" id="Q5ZNB1">
    <property type="glycosylation" value="1 site, No reported glycans"/>
</dbReference>
<dbReference type="BRENDA" id="3.2.1.8">
    <property type="organism ID" value="4616"/>
</dbReference>
<dbReference type="UniPathway" id="UPA00114"/>
<dbReference type="GO" id="GO:0005576">
    <property type="term" value="C:extracellular region"/>
    <property type="evidence" value="ECO:0007669"/>
    <property type="project" value="UniProtKB-SubCell"/>
</dbReference>
<dbReference type="GO" id="GO:0030248">
    <property type="term" value="F:cellulose binding"/>
    <property type="evidence" value="ECO:0007669"/>
    <property type="project" value="InterPro"/>
</dbReference>
<dbReference type="GO" id="GO:0031176">
    <property type="term" value="F:endo-1,4-beta-xylanase activity"/>
    <property type="evidence" value="ECO:0007669"/>
    <property type="project" value="UniProtKB-EC"/>
</dbReference>
<dbReference type="GO" id="GO:0045493">
    <property type="term" value="P:xylan catabolic process"/>
    <property type="evidence" value="ECO:0007669"/>
    <property type="project" value="UniProtKB-UniPathway"/>
</dbReference>
<dbReference type="Gene3D" id="3.20.20.80">
    <property type="entry name" value="Glycosidases"/>
    <property type="match status" value="1"/>
</dbReference>
<dbReference type="InterPro" id="IPR035971">
    <property type="entry name" value="CBD_sf"/>
</dbReference>
<dbReference type="InterPro" id="IPR000254">
    <property type="entry name" value="Cellulose-bd_dom_fun"/>
</dbReference>
<dbReference type="InterPro" id="IPR044846">
    <property type="entry name" value="GH10"/>
</dbReference>
<dbReference type="InterPro" id="IPR031158">
    <property type="entry name" value="GH10_AS"/>
</dbReference>
<dbReference type="InterPro" id="IPR001000">
    <property type="entry name" value="GH10_dom"/>
</dbReference>
<dbReference type="InterPro" id="IPR017853">
    <property type="entry name" value="Glycoside_hydrolase_SF"/>
</dbReference>
<dbReference type="PANTHER" id="PTHR31490:SF35">
    <property type="entry name" value="ENDO-1,4-BETA-XYLANASE"/>
    <property type="match status" value="1"/>
</dbReference>
<dbReference type="PANTHER" id="PTHR31490">
    <property type="entry name" value="GLYCOSYL HYDROLASE"/>
    <property type="match status" value="1"/>
</dbReference>
<dbReference type="Pfam" id="PF00734">
    <property type="entry name" value="CBM_1"/>
    <property type="match status" value="1"/>
</dbReference>
<dbReference type="Pfam" id="PF00331">
    <property type="entry name" value="Glyco_hydro_10"/>
    <property type="match status" value="1"/>
</dbReference>
<dbReference type="PRINTS" id="PR00134">
    <property type="entry name" value="GLHYDRLASE10"/>
</dbReference>
<dbReference type="SMART" id="SM00236">
    <property type="entry name" value="fCBD"/>
    <property type="match status" value="1"/>
</dbReference>
<dbReference type="SMART" id="SM00633">
    <property type="entry name" value="Glyco_10"/>
    <property type="match status" value="1"/>
</dbReference>
<dbReference type="SUPFAM" id="SSF51445">
    <property type="entry name" value="(Trans)glycosidases"/>
    <property type="match status" value="1"/>
</dbReference>
<dbReference type="SUPFAM" id="SSF57180">
    <property type="entry name" value="Cellulose-binding domain"/>
    <property type="match status" value="1"/>
</dbReference>
<dbReference type="PROSITE" id="PS00562">
    <property type="entry name" value="CBM1_1"/>
    <property type="match status" value="1"/>
</dbReference>
<dbReference type="PROSITE" id="PS51164">
    <property type="entry name" value="CBM1_2"/>
    <property type="match status" value="1"/>
</dbReference>
<dbReference type="PROSITE" id="PS00591">
    <property type="entry name" value="GH10_1"/>
    <property type="match status" value="1"/>
</dbReference>
<dbReference type="PROSITE" id="PS51760">
    <property type="entry name" value="GH10_2"/>
    <property type="match status" value="1"/>
</dbReference>
<organism>
    <name type="scientific">Talaromyces funiculosus</name>
    <name type="common">Fruitlet core rot fungus</name>
    <name type="synonym">Penicillium funiculosum</name>
    <dbReference type="NCBI Taxonomy" id="28572"/>
    <lineage>
        <taxon>Eukaryota</taxon>
        <taxon>Fungi</taxon>
        <taxon>Dikarya</taxon>
        <taxon>Ascomycota</taxon>
        <taxon>Pezizomycotina</taxon>
        <taxon>Eurotiomycetes</taxon>
        <taxon>Eurotiomycetidae</taxon>
        <taxon>Eurotiales</taxon>
        <taxon>Trichocomaceae</taxon>
        <taxon>Talaromyces</taxon>
        <taxon>Talaromyces sect. Talaromyces</taxon>
    </lineage>
</organism>
<keyword id="KW-0119">Carbohydrate metabolism</keyword>
<keyword id="KW-0903">Direct protein sequencing</keyword>
<keyword id="KW-1015">Disulfide bond</keyword>
<keyword id="KW-0325">Glycoprotein</keyword>
<keyword id="KW-0326">Glycosidase</keyword>
<keyword id="KW-0378">Hydrolase</keyword>
<keyword id="KW-0624">Polysaccharide degradation</keyword>
<keyword id="KW-0964">Secreted</keyword>
<keyword id="KW-0732">Signal</keyword>
<keyword id="KW-0858">Xylan degradation</keyword>
<proteinExistence type="evidence at protein level"/>
<sequence>MTLVKSILLALAAGHVAQAQLNTAAKAAGLLYFGTAVDNPDLSDSKYLVNLETADFGQITPANAMKWQPTEPSQGSYTFTQGDQIASLAKSNNDYLRCHNLVWYNQLPSYITSGSWTNATLIAALKEHINGVVTHYKGQCYAWDVVNEALNEDGTYRQNVFYQHIGEAYIPIAFAAAAAADPNAKLYYNDYNIEYAGAKATGAQGIVKLIQAAGGRIDGVGLQSHFIVGQTPSLATQKANMAAFTALGVDVAITELDIRMTLPDTSALQTQQSTDYQTTTTACVQTKGCVGITLWDYTDKYSWVPGTFSGQGDACPWDSNYNKKPAYYGILAGLQSGSGSSSSTSSTTLITTTTPTASSSTTSATTTSATSGAAHWGQCGGIGWSGPTICVSPYTCQVLNPYYSQCL</sequence>
<feature type="signal peptide" evidence="2">
    <location>
        <begin position="1"/>
        <end position="19"/>
    </location>
</feature>
<feature type="chain" id="PRO_5000072571" description="Endo-1,4-beta-xylanase D">
    <location>
        <begin position="20"/>
        <end position="407"/>
    </location>
</feature>
<feature type="domain" description="GH10" evidence="4">
    <location>
        <begin position="20"/>
        <end position="333"/>
    </location>
</feature>
<feature type="domain" description="CBM1" evidence="3">
    <location>
        <begin position="371"/>
        <end position="407"/>
    </location>
</feature>
<feature type="region of interest" description="Disordered" evidence="6">
    <location>
        <begin position="337"/>
        <end position="364"/>
    </location>
</feature>
<feature type="active site" description="Proton donor" evidence="1">
    <location>
        <position position="148"/>
    </location>
</feature>
<feature type="active site" description="Nucleophile" evidence="5">
    <location>
        <position position="255"/>
    </location>
</feature>
<feature type="glycosylation site" description="N-linked (GlcNAc...) asparagine" evidence="2">
    <location>
        <position position="118"/>
    </location>
</feature>
<feature type="disulfide bond" evidence="1">
    <location>
        <begin position="283"/>
        <end position="289"/>
    </location>
</feature>
<protein>
    <recommendedName>
        <fullName>Endo-1,4-beta-xylanase D</fullName>
        <shortName>Xylanase D</shortName>
        <ecNumber>3.2.1.8</ecNumber>
    </recommendedName>
    <alternativeName>
        <fullName>1,4-beta-D-xylan xylanohydrolase D</fullName>
    </alternativeName>
</protein>